<feature type="chain" id="PRO_0000439947" description="Cobalamin adenosyltransferase">
    <location>
        <begin position="1"/>
        <end position="184"/>
    </location>
</feature>
<feature type="region of interest" description="Disordered" evidence="2">
    <location>
        <begin position="1"/>
        <end position="21"/>
    </location>
</feature>
<feature type="binding site" evidence="1">
    <location>
        <begin position="10"/>
        <end position="13"/>
    </location>
    <ligand>
        <name>ATP</name>
        <dbReference type="ChEBI" id="CHEBI:30616"/>
    </ligand>
</feature>
<feature type="binding site" evidence="1">
    <location>
        <begin position="18"/>
        <end position="19"/>
    </location>
    <ligand>
        <name>ATP</name>
        <dbReference type="ChEBI" id="CHEBI:30616"/>
    </ligand>
</feature>
<feature type="binding site" evidence="1">
    <location>
        <position position="28"/>
    </location>
    <ligand>
        <name>ATP</name>
        <dbReference type="ChEBI" id="CHEBI:30616"/>
    </ligand>
</feature>
<feature type="binding site" evidence="1">
    <location>
        <begin position="130"/>
        <end position="134"/>
    </location>
    <ligand>
        <name>ATP</name>
        <dbReference type="ChEBI" id="CHEBI:30616"/>
    </ligand>
</feature>
<feature type="binding site" evidence="1">
    <location>
        <position position="154"/>
    </location>
    <ligand>
        <name>ATP</name>
        <dbReference type="ChEBI" id="CHEBI:30616"/>
    </ligand>
</feature>
<comment type="function">
    <text evidence="3">Adenosyltransferase that catalyzes the conversion of cob(II)alamin to adenosylcob(III)alamin (AdoCbl) in the presence of ATP and an electron donor. Acts as an accessory protein of IcmF that functions in cofactor repair, since IcmF is prone to inactivation during catalytic turnover due to the occasional loss of the 5'-deoxyadenosine moiety and formation of the inactive cob(II)alamin cofactor in its active site. Thus, receives and repairs the inactive cofactor, which is then reloaded onto IcmF in a GTPase-gated step.</text>
</comment>
<comment type="catalytic activity">
    <reaction evidence="3">
        <text>2 cob(II)alamin + AH2 + 2 ATP = 2 adenosylcob(III)alamin + 2 triphosphate + A + 2 H(+)</text>
        <dbReference type="Rhea" id="RHEA:53304"/>
        <dbReference type="ChEBI" id="CHEBI:13193"/>
        <dbReference type="ChEBI" id="CHEBI:15378"/>
        <dbReference type="ChEBI" id="CHEBI:16304"/>
        <dbReference type="ChEBI" id="CHEBI:17499"/>
        <dbReference type="ChEBI" id="CHEBI:18036"/>
        <dbReference type="ChEBI" id="CHEBI:18408"/>
        <dbReference type="ChEBI" id="CHEBI:30616"/>
    </reaction>
</comment>
<comment type="activity regulation">
    <text evidence="3">Is potentially allosterically regulated by GTP/GDP, which enhances its affinity for AdoCbl by 5-fold. Binds cob(II)alamin weakly in the absence of ATP. The presence of ATP (but not GTP or GDP) increases the affinity of cob(II)alamin for the enzyme, and stoichiometric binding is observed. GTP blocks the transfer of cob(II)alamin to IcmF from ATR, thus averting its reconstitution with inactive cofactor.</text>
</comment>
<comment type="biophysicochemical properties">
    <kinetics>
        <KM evidence="3">2.3 uM for ATP</KM>
        <text evidence="3">kcat is 3.8 min(-1).</text>
    </kinetics>
</comment>
<comment type="subunit">
    <text evidence="3">Homotrimer.</text>
</comment>
<comment type="similarity">
    <text evidence="5">Belongs to the Cob(I)alamin adenosyltransferase family.</text>
</comment>
<sequence>MGNRLSKIATRTGDAGTTGLGDGSRVGKNSLRIVAIGDVDELNSHIGLLLTEPDLPEDVRAALLHIQHDLFDLGGELSIPGYTLLKAPQVAQLDDWLAHYNAALPRLAEFILPGGSRPAAQAHICRTVCRRAERALVELGAAEALNEAPRQYLNRLSDLLFVLARVLNRAGGGSDVLWQRERES</sequence>
<keyword id="KW-0067">ATP-binding</keyword>
<keyword id="KW-0169">Cobalamin biosynthesis</keyword>
<keyword id="KW-0342">GTP-binding</keyword>
<keyword id="KW-0547">Nucleotide-binding</keyword>
<keyword id="KW-1185">Reference proteome</keyword>
<keyword id="KW-0808">Transferase</keyword>
<reference key="1">
    <citation type="journal article" date="2010" name="PLoS ONE">
        <title>The complete genome sequence of Cupriavidus metallidurans strain CH34, a master survivalist in harsh and anthropogenic environments.</title>
        <authorList>
            <person name="Janssen P.J."/>
            <person name="Van Houdt R."/>
            <person name="Moors H."/>
            <person name="Monsieurs P."/>
            <person name="Morin N."/>
            <person name="Michaux A."/>
            <person name="Benotmane M.A."/>
            <person name="Leys N."/>
            <person name="Vallaeys T."/>
            <person name="Lapidus A."/>
            <person name="Monchy S."/>
            <person name="Medigue C."/>
            <person name="Taghavi S."/>
            <person name="McCorkle S."/>
            <person name="Dunn J."/>
            <person name="van der Lelie D."/>
            <person name="Mergeay M."/>
        </authorList>
    </citation>
    <scope>NUCLEOTIDE SEQUENCE [LARGE SCALE GENOMIC DNA]</scope>
    <source>
        <strain>ATCC 43123 / DSM 2839 / NBRC 102507 / CH34</strain>
    </source>
</reference>
<reference key="2">
    <citation type="journal article" date="2017" name="J. Biol. Chem.">
        <title>Cofactor editing by the G-protein metallochaperone domain regulates the radical B12 enzyme IcmF.</title>
        <authorList>
            <person name="Li Z."/>
            <person name="Kitanishi K."/>
            <person name="Twahir U.T."/>
            <person name="Cracan V."/>
            <person name="Chapman D."/>
            <person name="Warncke K."/>
            <person name="Banerjee R."/>
        </authorList>
    </citation>
    <scope>FUNCTION</scope>
    <scope>CATALYTIC ACTIVITY</scope>
    <scope>BIOPHYSICOCHEMICAL PROPERTIES</scope>
    <scope>SUBUNIT</scope>
    <scope>GTP/GDP-BINDING</scope>
    <scope>ACTIVITY REGULATION</scope>
</reference>
<proteinExistence type="evidence at protein level"/>
<evidence type="ECO:0000250" key="1">
    <source>
        <dbReference type="UniProtKB" id="Q96EY8"/>
    </source>
</evidence>
<evidence type="ECO:0000256" key="2">
    <source>
        <dbReference type="SAM" id="MobiDB-lite"/>
    </source>
</evidence>
<evidence type="ECO:0000269" key="3">
    <source>
    </source>
</evidence>
<evidence type="ECO:0000303" key="4">
    <source>
    </source>
</evidence>
<evidence type="ECO:0000305" key="5"/>
<evidence type="ECO:0000305" key="6">
    <source>
    </source>
</evidence>
<evidence type="ECO:0000312" key="7">
    <source>
        <dbReference type="EMBL" id="ABF09796.1"/>
    </source>
</evidence>
<name>ATR_CUPMC</name>
<organism>
    <name type="scientific">Cupriavidus metallidurans (strain ATCC 43123 / DSM 2839 / NBRC 102507 / CH34)</name>
    <name type="common">Ralstonia metallidurans</name>
    <dbReference type="NCBI Taxonomy" id="266264"/>
    <lineage>
        <taxon>Bacteria</taxon>
        <taxon>Pseudomonadati</taxon>
        <taxon>Pseudomonadota</taxon>
        <taxon>Betaproteobacteria</taxon>
        <taxon>Burkholderiales</taxon>
        <taxon>Burkholderiaceae</taxon>
        <taxon>Cupriavidus</taxon>
    </lineage>
</organism>
<gene>
    <name evidence="7" type="primary">cobO</name>
    <name evidence="7" type="ordered locus">Rmet_2923</name>
</gene>
<dbReference type="EC" id="2.5.1.-" evidence="3"/>
<dbReference type="EMBL" id="CP000352">
    <property type="protein sequence ID" value="ABF09796.1"/>
    <property type="molecule type" value="Genomic_DNA"/>
</dbReference>
<dbReference type="RefSeq" id="WP_011517468.1">
    <property type="nucleotide sequence ID" value="NC_007973.1"/>
</dbReference>
<dbReference type="SMR" id="Q1LJ80"/>
<dbReference type="STRING" id="266264.Rmet_2923"/>
<dbReference type="KEGG" id="rme:Rmet_2923"/>
<dbReference type="eggNOG" id="COG2096">
    <property type="taxonomic scope" value="Bacteria"/>
</dbReference>
<dbReference type="HOGENOM" id="CLU_083486_0_1_4"/>
<dbReference type="Proteomes" id="UP000002429">
    <property type="component" value="Chromosome"/>
</dbReference>
<dbReference type="GO" id="GO:0005524">
    <property type="term" value="F:ATP binding"/>
    <property type="evidence" value="ECO:0000314"/>
    <property type="project" value="UniProtKB"/>
</dbReference>
<dbReference type="GO" id="GO:0008817">
    <property type="term" value="F:corrinoid adenosyltransferase activity"/>
    <property type="evidence" value="ECO:0007669"/>
    <property type="project" value="TreeGrafter"/>
</dbReference>
<dbReference type="GO" id="GO:0019003">
    <property type="term" value="F:GDP binding"/>
    <property type="evidence" value="ECO:0000314"/>
    <property type="project" value="UniProtKB"/>
</dbReference>
<dbReference type="GO" id="GO:0005525">
    <property type="term" value="F:GTP binding"/>
    <property type="evidence" value="ECO:0000314"/>
    <property type="project" value="UniProtKB"/>
</dbReference>
<dbReference type="GO" id="GO:0016765">
    <property type="term" value="F:transferase activity, transferring alkyl or aryl (other than methyl) groups"/>
    <property type="evidence" value="ECO:0000314"/>
    <property type="project" value="UniProtKB"/>
</dbReference>
<dbReference type="GO" id="GO:0009236">
    <property type="term" value="P:cobalamin biosynthetic process"/>
    <property type="evidence" value="ECO:0000314"/>
    <property type="project" value="UniProtKB"/>
</dbReference>
<dbReference type="GO" id="GO:0070207">
    <property type="term" value="P:protein homotrimerization"/>
    <property type="evidence" value="ECO:0000314"/>
    <property type="project" value="UniProtKB"/>
</dbReference>
<dbReference type="GO" id="GO:0030091">
    <property type="term" value="P:protein repair"/>
    <property type="evidence" value="ECO:0000314"/>
    <property type="project" value="UniProtKB"/>
</dbReference>
<dbReference type="FunFam" id="1.20.1200.10:FF:000001">
    <property type="entry name" value="Cob(I)yrinic acid a,c-diamide adenosyltransferase"/>
    <property type="match status" value="1"/>
</dbReference>
<dbReference type="Gene3D" id="1.20.1200.10">
    <property type="entry name" value="Cobalamin adenosyltransferase-like"/>
    <property type="match status" value="1"/>
</dbReference>
<dbReference type="InterPro" id="IPR016030">
    <property type="entry name" value="CblAdoTrfase-like"/>
</dbReference>
<dbReference type="InterPro" id="IPR036451">
    <property type="entry name" value="CblAdoTrfase-like_sf"/>
</dbReference>
<dbReference type="InterPro" id="IPR029499">
    <property type="entry name" value="PduO-typ"/>
</dbReference>
<dbReference type="NCBIfam" id="TIGR00636">
    <property type="entry name" value="PduO_Nterm"/>
    <property type="match status" value="1"/>
</dbReference>
<dbReference type="PANTHER" id="PTHR12213">
    <property type="entry name" value="CORRINOID ADENOSYLTRANSFERASE"/>
    <property type="match status" value="1"/>
</dbReference>
<dbReference type="PANTHER" id="PTHR12213:SF0">
    <property type="entry name" value="CORRINOID ADENOSYLTRANSFERASE MMAB"/>
    <property type="match status" value="1"/>
</dbReference>
<dbReference type="Pfam" id="PF01923">
    <property type="entry name" value="Cob_adeno_trans"/>
    <property type="match status" value="1"/>
</dbReference>
<dbReference type="SUPFAM" id="SSF89028">
    <property type="entry name" value="Cobalamin adenosyltransferase-like"/>
    <property type="match status" value="1"/>
</dbReference>
<protein>
    <recommendedName>
        <fullName evidence="6">Cobalamin adenosyltransferase</fullName>
        <shortName evidence="4">ATR</shortName>
        <ecNumber evidence="3">2.5.1.-</ecNumber>
    </recommendedName>
</protein>
<accession>Q1LJ80</accession>